<comment type="function">
    <text evidence="1">Catalyzes the attachment of proline to tRNA(Pro) in a two-step reaction: proline is first activated by ATP to form Pro-AMP and then transferred to the acceptor end of tRNA(Pro). As ProRS can inadvertently accommodate and process non-cognate amino acids such as alanine and cysteine, to avoid such errors it has two additional distinct editing activities against alanine. One activity is designated as 'pretransfer' editing and involves the tRNA(Pro)-independent hydrolysis of activated Ala-AMP. The other activity is designated 'posttransfer' editing and involves deacylation of mischarged Ala-tRNA(Pro). The misacylated Cys-tRNA(Pro) is not edited by ProRS.</text>
</comment>
<comment type="catalytic activity">
    <reaction evidence="1">
        <text>tRNA(Pro) + L-proline + ATP = L-prolyl-tRNA(Pro) + AMP + diphosphate</text>
        <dbReference type="Rhea" id="RHEA:14305"/>
        <dbReference type="Rhea" id="RHEA-COMP:9700"/>
        <dbReference type="Rhea" id="RHEA-COMP:9702"/>
        <dbReference type="ChEBI" id="CHEBI:30616"/>
        <dbReference type="ChEBI" id="CHEBI:33019"/>
        <dbReference type="ChEBI" id="CHEBI:60039"/>
        <dbReference type="ChEBI" id="CHEBI:78442"/>
        <dbReference type="ChEBI" id="CHEBI:78532"/>
        <dbReference type="ChEBI" id="CHEBI:456215"/>
        <dbReference type="EC" id="6.1.1.15"/>
    </reaction>
</comment>
<comment type="subunit">
    <text evidence="1">Homodimer.</text>
</comment>
<comment type="subcellular location">
    <subcellularLocation>
        <location evidence="1">Cytoplasm</location>
    </subcellularLocation>
</comment>
<comment type="domain">
    <text evidence="1">Consists of three domains: the N-terminal catalytic domain, the editing domain and the C-terminal anticodon-binding domain.</text>
</comment>
<comment type="similarity">
    <text evidence="1">Belongs to the class-II aminoacyl-tRNA synthetase family. ProS type 1 subfamily.</text>
</comment>
<sequence>MRTSQYLLSTQKETPADAEVISHQLMLRAGMIRKLASGLYTWLPTGVRVLKKVENIVREEMNNAGAIEVSMPVVQPADLWQESGRWEQYGPELLRFVDRGERPFVLGPTHEEVITDLIRGEINSYKQLPLNFFQIQTKFRDEVRPRFGVMRAREFLMKDAYSFHTTQESLQETYDAMYTAYSKIFSRMDLNFRAVLADTGSIGGSASHEFQVLAESGEDDIVFSTGSDYAANIEFAEALAPTEPRAPATEELRIVDTPNAKTIAELVEQFKLPIEKTVKTLLVHAHEESGHKLVALLVRGDHDLNEIKAEKLPQVAKPLTFASEEEIRAAIGAGPGSLGPVNLSLPVIADRSVAVMSDFGAGANIDGKHYFGINWERDLALPLVADLRNVVEGDISPDGKGTLQIKRGIEVGHIFQLGTKYSEAMKATVQGEDGRNQVMTMGCYGIGVSRVVAAAIEQNHDDRGIIWPDAIAPFQVAILPMNMHKSFRVKELAEELYTTLRSHGIDVILDDRKERPGVMFADMELIGVPHNIVIGDRNLDSEEVEYKNRRVGEKQMIKTSEIVEFLLSQIKR</sequence>
<keyword id="KW-0030">Aminoacyl-tRNA synthetase</keyword>
<keyword id="KW-0067">ATP-binding</keyword>
<keyword id="KW-0963">Cytoplasm</keyword>
<keyword id="KW-0436">Ligase</keyword>
<keyword id="KW-0547">Nucleotide-binding</keyword>
<keyword id="KW-0648">Protein biosynthesis</keyword>
<accession>B1JQI5</accession>
<gene>
    <name evidence="1" type="primary">proS</name>
    <name type="ordered locus">YPK_1091</name>
</gene>
<evidence type="ECO:0000255" key="1">
    <source>
        <dbReference type="HAMAP-Rule" id="MF_01569"/>
    </source>
</evidence>
<protein>
    <recommendedName>
        <fullName evidence="1">Proline--tRNA ligase</fullName>
        <ecNumber evidence="1">6.1.1.15</ecNumber>
    </recommendedName>
    <alternativeName>
        <fullName evidence="1">Prolyl-tRNA synthetase</fullName>
        <shortName evidence="1">ProRS</shortName>
    </alternativeName>
</protein>
<proteinExistence type="inferred from homology"/>
<dbReference type="EC" id="6.1.1.15" evidence="1"/>
<dbReference type="EMBL" id="CP000950">
    <property type="protein sequence ID" value="ACA67392.1"/>
    <property type="molecule type" value="Genomic_DNA"/>
</dbReference>
<dbReference type="RefSeq" id="WP_012104744.1">
    <property type="nucleotide sequence ID" value="NZ_CP009792.1"/>
</dbReference>
<dbReference type="SMR" id="B1JQI5"/>
<dbReference type="GeneID" id="49785003"/>
<dbReference type="KEGG" id="ypy:YPK_1091"/>
<dbReference type="PATRIC" id="fig|502800.11.peg.1724"/>
<dbReference type="GO" id="GO:0005829">
    <property type="term" value="C:cytosol"/>
    <property type="evidence" value="ECO:0007669"/>
    <property type="project" value="TreeGrafter"/>
</dbReference>
<dbReference type="GO" id="GO:0002161">
    <property type="term" value="F:aminoacyl-tRNA deacylase activity"/>
    <property type="evidence" value="ECO:0007669"/>
    <property type="project" value="InterPro"/>
</dbReference>
<dbReference type="GO" id="GO:0005524">
    <property type="term" value="F:ATP binding"/>
    <property type="evidence" value="ECO:0007669"/>
    <property type="project" value="UniProtKB-UniRule"/>
</dbReference>
<dbReference type="GO" id="GO:0004827">
    <property type="term" value="F:proline-tRNA ligase activity"/>
    <property type="evidence" value="ECO:0007669"/>
    <property type="project" value="UniProtKB-UniRule"/>
</dbReference>
<dbReference type="GO" id="GO:0006433">
    <property type="term" value="P:prolyl-tRNA aminoacylation"/>
    <property type="evidence" value="ECO:0007669"/>
    <property type="project" value="UniProtKB-UniRule"/>
</dbReference>
<dbReference type="CDD" id="cd04334">
    <property type="entry name" value="ProRS-INS"/>
    <property type="match status" value="1"/>
</dbReference>
<dbReference type="CDD" id="cd00861">
    <property type="entry name" value="ProRS_anticodon_short"/>
    <property type="match status" value="1"/>
</dbReference>
<dbReference type="CDD" id="cd00779">
    <property type="entry name" value="ProRS_core_prok"/>
    <property type="match status" value="1"/>
</dbReference>
<dbReference type="FunFam" id="3.30.930.10:FF:000012">
    <property type="entry name" value="Proline--tRNA ligase"/>
    <property type="match status" value="1"/>
</dbReference>
<dbReference type="FunFam" id="3.30.930.10:FF:000097">
    <property type="entry name" value="Proline--tRNA ligase"/>
    <property type="match status" value="1"/>
</dbReference>
<dbReference type="FunFam" id="3.40.50.800:FF:000006">
    <property type="entry name" value="Proline--tRNA ligase"/>
    <property type="match status" value="1"/>
</dbReference>
<dbReference type="FunFam" id="3.90.960.10:FF:000001">
    <property type="entry name" value="Proline--tRNA ligase"/>
    <property type="match status" value="1"/>
</dbReference>
<dbReference type="Gene3D" id="3.40.50.800">
    <property type="entry name" value="Anticodon-binding domain"/>
    <property type="match status" value="1"/>
</dbReference>
<dbReference type="Gene3D" id="3.30.930.10">
    <property type="entry name" value="Bira Bifunctional Protein, Domain 2"/>
    <property type="match status" value="2"/>
</dbReference>
<dbReference type="Gene3D" id="3.90.960.10">
    <property type="entry name" value="YbaK/aminoacyl-tRNA synthetase-associated domain"/>
    <property type="match status" value="1"/>
</dbReference>
<dbReference type="HAMAP" id="MF_01569">
    <property type="entry name" value="Pro_tRNA_synth_type1"/>
    <property type="match status" value="1"/>
</dbReference>
<dbReference type="InterPro" id="IPR002314">
    <property type="entry name" value="aa-tRNA-synt_IIb"/>
</dbReference>
<dbReference type="InterPro" id="IPR006195">
    <property type="entry name" value="aa-tRNA-synth_II"/>
</dbReference>
<dbReference type="InterPro" id="IPR045864">
    <property type="entry name" value="aa-tRNA-synth_II/BPL/LPL"/>
</dbReference>
<dbReference type="InterPro" id="IPR004154">
    <property type="entry name" value="Anticodon-bd"/>
</dbReference>
<dbReference type="InterPro" id="IPR036621">
    <property type="entry name" value="Anticodon-bd_dom_sf"/>
</dbReference>
<dbReference type="InterPro" id="IPR002316">
    <property type="entry name" value="Pro-tRNA-ligase_IIa"/>
</dbReference>
<dbReference type="InterPro" id="IPR004500">
    <property type="entry name" value="Pro-tRNA-synth_IIa_bac-type"/>
</dbReference>
<dbReference type="InterPro" id="IPR023717">
    <property type="entry name" value="Pro-tRNA-Synthase_IIa_type1"/>
</dbReference>
<dbReference type="InterPro" id="IPR050062">
    <property type="entry name" value="Pro-tRNA_synthetase"/>
</dbReference>
<dbReference type="InterPro" id="IPR044140">
    <property type="entry name" value="ProRS_anticodon_short"/>
</dbReference>
<dbReference type="InterPro" id="IPR033730">
    <property type="entry name" value="ProRS_core_prok"/>
</dbReference>
<dbReference type="InterPro" id="IPR036754">
    <property type="entry name" value="YbaK/aa-tRNA-synt-asso_dom_sf"/>
</dbReference>
<dbReference type="InterPro" id="IPR007214">
    <property type="entry name" value="YbaK/aa-tRNA-synth-assoc-dom"/>
</dbReference>
<dbReference type="NCBIfam" id="NF006625">
    <property type="entry name" value="PRK09194.1"/>
    <property type="match status" value="1"/>
</dbReference>
<dbReference type="NCBIfam" id="TIGR00409">
    <property type="entry name" value="proS_fam_II"/>
    <property type="match status" value="1"/>
</dbReference>
<dbReference type="PANTHER" id="PTHR42753">
    <property type="entry name" value="MITOCHONDRIAL RIBOSOME PROTEIN L39/PROLYL-TRNA LIGASE FAMILY MEMBER"/>
    <property type="match status" value="1"/>
</dbReference>
<dbReference type="PANTHER" id="PTHR42753:SF2">
    <property type="entry name" value="PROLINE--TRNA LIGASE"/>
    <property type="match status" value="1"/>
</dbReference>
<dbReference type="Pfam" id="PF03129">
    <property type="entry name" value="HGTP_anticodon"/>
    <property type="match status" value="1"/>
</dbReference>
<dbReference type="Pfam" id="PF00587">
    <property type="entry name" value="tRNA-synt_2b"/>
    <property type="match status" value="1"/>
</dbReference>
<dbReference type="Pfam" id="PF04073">
    <property type="entry name" value="tRNA_edit"/>
    <property type="match status" value="1"/>
</dbReference>
<dbReference type="PIRSF" id="PIRSF001535">
    <property type="entry name" value="ProRS_1"/>
    <property type="match status" value="1"/>
</dbReference>
<dbReference type="PRINTS" id="PR01046">
    <property type="entry name" value="TRNASYNTHPRO"/>
</dbReference>
<dbReference type="SUPFAM" id="SSF52954">
    <property type="entry name" value="Class II aaRS ABD-related"/>
    <property type="match status" value="1"/>
</dbReference>
<dbReference type="SUPFAM" id="SSF55681">
    <property type="entry name" value="Class II aaRS and biotin synthetases"/>
    <property type="match status" value="1"/>
</dbReference>
<dbReference type="SUPFAM" id="SSF55826">
    <property type="entry name" value="YbaK/ProRS associated domain"/>
    <property type="match status" value="1"/>
</dbReference>
<dbReference type="PROSITE" id="PS50862">
    <property type="entry name" value="AA_TRNA_LIGASE_II"/>
    <property type="match status" value="1"/>
</dbReference>
<feature type="chain" id="PRO_1000199447" description="Proline--tRNA ligase">
    <location>
        <begin position="1"/>
        <end position="572"/>
    </location>
</feature>
<organism>
    <name type="scientific">Yersinia pseudotuberculosis serotype O:3 (strain YPIII)</name>
    <dbReference type="NCBI Taxonomy" id="502800"/>
    <lineage>
        <taxon>Bacteria</taxon>
        <taxon>Pseudomonadati</taxon>
        <taxon>Pseudomonadota</taxon>
        <taxon>Gammaproteobacteria</taxon>
        <taxon>Enterobacterales</taxon>
        <taxon>Yersiniaceae</taxon>
        <taxon>Yersinia</taxon>
    </lineage>
</organism>
<name>SYP_YERPY</name>
<reference key="1">
    <citation type="submission" date="2008-02" db="EMBL/GenBank/DDBJ databases">
        <title>Complete sequence of Yersinia pseudotuberculosis YPIII.</title>
        <authorList>
            <consortium name="US DOE Joint Genome Institute"/>
            <person name="Copeland A."/>
            <person name="Lucas S."/>
            <person name="Lapidus A."/>
            <person name="Glavina del Rio T."/>
            <person name="Dalin E."/>
            <person name="Tice H."/>
            <person name="Bruce D."/>
            <person name="Goodwin L."/>
            <person name="Pitluck S."/>
            <person name="Munk A.C."/>
            <person name="Brettin T."/>
            <person name="Detter J.C."/>
            <person name="Han C."/>
            <person name="Tapia R."/>
            <person name="Schmutz J."/>
            <person name="Larimer F."/>
            <person name="Land M."/>
            <person name="Hauser L."/>
            <person name="Challacombe J.F."/>
            <person name="Green L."/>
            <person name="Lindler L.E."/>
            <person name="Nikolich M.P."/>
            <person name="Richardson P."/>
        </authorList>
    </citation>
    <scope>NUCLEOTIDE SEQUENCE [LARGE SCALE GENOMIC DNA]</scope>
    <source>
        <strain>YPIII</strain>
    </source>
</reference>